<protein>
    <recommendedName>
        <fullName evidence="2">Probable peptidoglycan glycosyltransferase FtsW</fullName>
        <shortName evidence="2">PGT</shortName>
        <ecNumber evidence="2">2.4.99.28</ecNumber>
    </recommendedName>
    <alternativeName>
        <fullName evidence="2">Cell division protein FtsW</fullName>
    </alternativeName>
    <alternativeName>
        <fullName evidence="2">Cell wall polymerase</fullName>
    </alternativeName>
    <alternativeName>
        <fullName evidence="2">Peptidoglycan polymerase</fullName>
        <shortName evidence="2">PG polymerase</shortName>
    </alternativeName>
</protein>
<comment type="function">
    <text evidence="2">Peptidoglycan polymerase that is essential for cell division.</text>
</comment>
<comment type="catalytic activity">
    <reaction evidence="2">
        <text>[GlcNAc-(1-&gt;4)-Mur2Ac(oyl-L-Ala-gamma-D-Glu-L-Lys-D-Ala-D-Ala)](n)-di-trans,octa-cis-undecaprenyl diphosphate + beta-D-GlcNAc-(1-&gt;4)-Mur2Ac(oyl-L-Ala-gamma-D-Glu-L-Lys-D-Ala-D-Ala)-di-trans,octa-cis-undecaprenyl diphosphate = [GlcNAc-(1-&gt;4)-Mur2Ac(oyl-L-Ala-gamma-D-Glu-L-Lys-D-Ala-D-Ala)](n+1)-di-trans,octa-cis-undecaprenyl diphosphate + di-trans,octa-cis-undecaprenyl diphosphate + H(+)</text>
        <dbReference type="Rhea" id="RHEA:23708"/>
        <dbReference type="Rhea" id="RHEA-COMP:9602"/>
        <dbReference type="Rhea" id="RHEA-COMP:9603"/>
        <dbReference type="ChEBI" id="CHEBI:15378"/>
        <dbReference type="ChEBI" id="CHEBI:58405"/>
        <dbReference type="ChEBI" id="CHEBI:60033"/>
        <dbReference type="ChEBI" id="CHEBI:78435"/>
        <dbReference type="EC" id="2.4.99.28"/>
    </reaction>
</comment>
<comment type="pathway">
    <text evidence="2">Cell wall biogenesis; peptidoglycan biosynthesis.</text>
</comment>
<comment type="subcellular location">
    <subcellularLocation>
        <location evidence="2">Cell inner membrane</location>
        <topology evidence="2">Multi-pass membrane protein</topology>
    </subcellularLocation>
    <text evidence="2">Localizes to the division septum.</text>
</comment>
<comment type="similarity">
    <text evidence="2">Belongs to the SEDS family. FtsW subfamily.</text>
</comment>
<keyword id="KW-0131">Cell cycle</keyword>
<keyword id="KW-0132">Cell division</keyword>
<keyword id="KW-0997">Cell inner membrane</keyword>
<keyword id="KW-1003">Cell membrane</keyword>
<keyword id="KW-0133">Cell shape</keyword>
<keyword id="KW-0961">Cell wall biogenesis/degradation</keyword>
<keyword id="KW-0328">Glycosyltransferase</keyword>
<keyword id="KW-0472">Membrane</keyword>
<keyword id="KW-0573">Peptidoglycan synthesis</keyword>
<keyword id="KW-0808">Transferase</keyword>
<keyword id="KW-0812">Transmembrane</keyword>
<keyword id="KW-1133">Transmembrane helix</keyword>
<name>FTSW_AERS4</name>
<evidence type="ECO:0000255" key="1"/>
<evidence type="ECO:0000255" key="2">
    <source>
        <dbReference type="HAMAP-Rule" id="MF_00913"/>
    </source>
</evidence>
<feature type="chain" id="PRO_0000415169" description="Probable peptidoglycan glycosyltransferase FtsW">
    <location>
        <begin position="1"/>
        <end position="394"/>
    </location>
</feature>
<feature type="topological domain" description="Cytoplasmic" evidence="1">
    <location>
        <begin position="1"/>
        <end position="27"/>
    </location>
</feature>
<feature type="transmembrane region" description="Helical" evidence="2">
    <location>
        <begin position="28"/>
        <end position="48"/>
    </location>
</feature>
<feature type="topological domain" description="Periplasmic" evidence="1">
    <location>
        <begin position="49"/>
        <end position="64"/>
    </location>
</feature>
<feature type="transmembrane region" description="Helical" evidence="2">
    <location>
        <begin position="65"/>
        <end position="85"/>
    </location>
</feature>
<feature type="topological domain" description="Cytoplasmic" evidence="1">
    <location>
        <begin position="86"/>
        <end position="88"/>
    </location>
</feature>
<feature type="transmembrane region" description="Helical" evidence="2">
    <location>
        <begin position="89"/>
        <end position="109"/>
    </location>
</feature>
<feature type="topological domain" description="Periplasmic" evidence="1">
    <location>
        <begin position="110"/>
        <end position="123"/>
    </location>
</feature>
<feature type="transmembrane region" description="Helical" evidence="2">
    <location>
        <begin position="124"/>
        <end position="144"/>
    </location>
</feature>
<feature type="topological domain" description="Cytoplasmic" evidence="1">
    <location>
        <begin position="145"/>
        <end position="154"/>
    </location>
</feature>
<feature type="transmembrane region" description="Helical" evidence="2">
    <location>
        <begin position="155"/>
        <end position="175"/>
    </location>
</feature>
<feature type="topological domain" description="Periplasmic" evidence="1">
    <location>
        <position position="176"/>
    </location>
</feature>
<feature type="transmembrane region" description="Helical" evidence="2">
    <location>
        <begin position="177"/>
        <end position="197"/>
    </location>
</feature>
<feature type="topological domain" description="Cytoplasmic" evidence="1">
    <location>
        <position position="198"/>
    </location>
</feature>
<feature type="transmembrane region" description="Helical" evidence="2">
    <location>
        <begin position="199"/>
        <end position="219"/>
    </location>
</feature>
<feature type="topological domain" description="Periplasmic" evidence="1">
    <location>
        <begin position="220"/>
        <end position="279"/>
    </location>
</feature>
<feature type="transmembrane region" description="Helical" evidence="2">
    <location>
        <begin position="280"/>
        <end position="300"/>
    </location>
</feature>
<feature type="topological domain" description="Cytoplasmic" evidence="1">
    <location>
        <begin position="301"/>
        <end position="322"/>
    </location>
</feature>
<feature type="transmembrane region" description="Helical" evidence="2">
    <location>
        <begin position="323"/>
        <end position="343"/>
    </location>
</feature>
<feature type="topological domain" description="Periplasmic" evidence="1">
    <location>
        <begin position="344"/>
        <end position="354"/>
    </location>
</feature>
<feature type="transmembrane region" description="Helical" evidence="2">
    <location>
        <begin position="355"/>
        <end position="375"/>
    </location>
</feature>
<feature type="topological domain" description="Cytoplasmic" evidence="1">
    <location>
        <begin position="376"/>
        <end position="394"/>
    </location>
</feature>
<gene>
    <name evidence="2" type="primary">ftsW</name>
    <name type="ordered locus">ASA_0397</name>
</gene>
<reference key="1">
    <citation type="journal article" date="2008" name="BMC Genomics">
        <title>The genome of Aeromonas salmonicida subsp. salmonicida A449: insights into the evolution of a fish pathogen.</title>
        <authorList>
            <person name="Reith M.E."/>
            <person name="Singh R.K."/>
            <person name="Curtis B."/>
            <person name="Boyd J.M."/>
            <person name="Bouevitch A."/>
            <person name="Kimball J."/>
            <person name="Munholland J."/>
            <person name="Murphy C."/>
            <person name="Sarty D."/>
            <person name="Williams J."/>
            <person name="Nash J.H."/>
            <person name="Johnson S.C."/>
            <person name="Brown L.L."/>
        </authorList>
    </citation>
    <scope>NUCLEOTIDE SEQUENCE [LARGE SCALE GENOMIC DNA]</scope>
    <source>
        <strain>A449</strain>
    </source>
</reference>
<accession>A4SI55</accession>
<dbReference type="EC" id="2.4.99.28" evidence="2"/>
<dbReference type="EMBL" id="CP000644">
    <property type="protein sequence ID" value="ABO88577.1"/>
    <property type="molecule type" value="Genomic_DNA"/>
</dbReference>
<dbReference type="RefSeq" id="WP_005314192.1">
    <property type="nucleotide sequence ID" value="NC_009348.1"/>
</dbReference>
<dbReference type="SMR" id="A4SI55"/>
<dbReference type="STRING" id="29491.GCA_000820065_04394"/>
<dbReference type="GeneID" id="79877932"/>
<dbReference type="KEGG" id="asa:ASA_0397"/>
<dbReference type="eggNOG" id="COG0772">
    <property type="taxonomic scope" value="Bacteria"/>
</dbReference>
<dbReference type="HOGENOM" id="CLU_029243_1_1_6"/>
<dbReference type="UniPathway" id="UPA00219"/>
<dbReference type="Proteomes" id="UP000000225">
    <property type="component" value="Chromosome"/>
</dbReference>
<dbReference type="GO" id="GO:0032153">
    <property type="term" value="C:cell division site"/>
    <property type="evidence" value="ECO:0007669"/>
    <property type="project" value="UniProtKB-UniRule"/>
</dbReference>
<dbReference type="GO" id="GO:0005886">
    <property type="term" value="C:plasma membrane"/>
    <property type="evidence" value="ECO:0007669"/>
    <property type="project" value="UniProtKB-SubCell"/>
</dbReference>
<dbReference type="GO" id="GO:0015648">
    <property type="term" value="F:lipid-linked peptidoglycan transporter activity"/>
    <property type="evidence" value="ECO:0007669"/>
    <property type="project" value="TreeGrafter"/>
</dbReference>
<dbReference type="GO" id="GO:0008955">
    <property type="term" value="F:peptidoglycan glycosyltransferase activity"/>
    <property type="evidence" value="ECO:0007669"/>
    <property type="project" value="UniProtKB-UniRule"/>
</dbReference>
<dbReference type="GO" id="GO:0071555">
    <property type="term" value="P:cell wall organization"/>
    <property type="evidence" value="ECO:0007669"/>
    <property type="project" value="UniProtKB-KW"/>
</dbReference>
<dbReference type="GO" id="GO:0043093">
    <property type="term" value="P:FtsZ-dependent cytokinesis"/>
    <property type="evidence" value="ECO:0007669"/>
    <property type="project" value="UniProtKB-UniRule"/>
</dbReference>
<dbReference type="GO" id="GO:0009252">
    <property type="term" value="P:peptidoglycan biosynthetic process"/>
    <property type="evidence" value="ECO:0007669"/>
    <property type="project" value="UniProtKB-UniRule"/>
</dbReference>
<dbReference type="GO" id="GO:0008360">
    <property type="term" value="P:regulation of cell shape"/>
    <property type="evidence" value="ECO:0007669"/>
    <property type="project" value="UniProtKB-KW"/>
</dbReference>
<dbReference type="HAMAP" id="MF_00913">
    <property type="entry name" value="PGT_FtsW_proteobact"/>
    <property type="match status" value="1"/>
</dbReference>
<dbReference type="InterPro" id="IPR018365">
    <property type="entry name" value="Cell_cycle_FtsW-rel_CS"/>
</dbReference>
<dbReference type="InterPro" id="IPR013437">
    <property type="entry name" value="FtsW"/>
</dbReference>
<dbReference type="InterPro" id="IPR001182">
    <property type="entry name" value="FtsW/RodA"/>
</dbReference>
<dbReference type="NCBIfam" id="TIGR02614">
    <property type="entry name" value="ftsW"/>
    <property type="match status" value="1"/>
</dbReference>
<dbReference type="NCBIfam" id="NF008042">
    <property type="entry name" value="PRK10774.1"/>
    <property type="match status" value="1"/>
</dbReference>
<dbReference type="PANTHER" id="PTHR30474">
    <property type="entry name" value="CELL CYCLE PROTEIN"/>
    <property type="match status" value="1"/>
</dbReference>
<dbReference type="PANTHER" id="PTHR30474:SF2">
    <property type="entry name" value="PEPTIDOGLYCAN GLYCOSYLTRANSFERASE FTSW-RELATED"/>
    <property type="match status" value="1"/>
</dbReference>
<dbReference type="Pfam" id="PF01098">
    <property type="entry name" value="FTSW_RODA_SPOVE"/>
    <property type="match status" value="1"/>
</dbReference>
<dbReference type="PROSITE" id="PS00428">
    <property type="entry name" value="FTSW_RODA_SPOVE"/>
    <property type="match status" value="1"/>
</dbReference>
<sequence length="394" mass="43025">MSALRSVAGLLQRWLLPARPAGLYDRQLVVLALALMAVGLVIVASASIPEGIAINNDPFMFVKRHGLFLVMALGISWFVLQVPMARWQHYNGPMLVLAILMLVLVLLVGRSVNGSIRWLPLGPFNLQPAEFGKLALFVYLAGYLVRRQSEVRERFIGFMKPMAVLFVVAILLLAQPDLGSVVVMFVTSLGMLFLAGARLGQFIGLILVGVSAVVTLVIAEPYRMRRVTSFLDPWADPFGSGYQLTQSLMAFGRGSWFGEGLGNSIQKMEYLPEAHTDFVFAILGEELGYAGVLGALFLIFALSFKALKLGHQALVAERLYEGYLAIGIGIWFSFQTFVNVGAASGMMPTKGLTLPLVSYGGSSLIIMMVAVSMLVRIDFELRQASAQARVREVS</sequence>
<organism>
    <name type="scientific">Aeromonas salmonicida (strain A449)</name>
    <dbReference type="NCBI Taxonomy" id="382245"/>
    <lineage>
        <taxon>Bacteria</taxon>
        <taxon>Pseudomonadati</taxon>
        <taxon>Pseudomonadota</taxon>
        <taxon>Gammaproteobacteria</taxon>
        <taxon>Aeromonadales</taxon>
        <taxon>Aeromonadaceae</taxon>
        <taxon>Aeromonas</taxon>
    </lineage>
</organism>
<proteinExistence type="inferred from homology"/>